<reference key="1">
    <citation type="submission" date="2007-05" db="EMBL/GenBank/DDBJ databases">
        <title>Complete sequence of Geobacter uraniireducens Rf4.</title>
        <authorList>
            <consortium name="US DOE Joint Genome Institute"/>
            <person name="Copeland A."/>
            <person name="Lucas S."/>
            <person name="Lapidus A."/>
            <person name="Barry K."/>
            <person name="Detter J.C."/>
            <person name="Glavina del Rio T."/>
            <person name="Hammon N."/>
            <person name="Israni S."/>
            <person name="Dalin E."/>
            <person name="Tice H."/>
            <person name="Pitluck S."/>
            <person name="Chertkov O."/>
            <person name="Brettin T."/>
            <person name="Bruce D."/>
            <person name="Han C."/>
            <person name="Schmutz J."/>
            <person name="Larimer F."/>
            <person name="Land M."/>
            <person name="Hauser L."/>
            <person name="Kyrpides N."/>
            <person name="Mikhailova N."/>
            <person name="Shelobolina E."/>
            <person name="Aklujkar M."/>
            <person name="Lovley D."/>
            <person name="Richardson P."/>
        </authorList>
    </citation>
    <scope>NUCLEOTIDE SEQUENCE [LARGE SCALE GENOMIC DNA]</scope>
    <source>
        <strain>ATCC BAA-1134 / JCM 13001 / Rf4</strain>
    </source>
</reference>
<evidence type="ECO:0000255" key="1">
    <source>
        <dbReference type="HAMAP-Rule" id="MF_00175"/>
    </source>
</evidence>
<evidence type="ECO:0000255" key="2">
    <source>
        <dbReference type="PROSITE-ProRule" id="PRU01250"/>
    </source>
</evidence>
<protein>
    <recommendedName>
        <fullName evidence="1">ATP-dependent Clp protease ATP-binding subunit ClpX</fullName>
    </recommendedName>
</protein>
<feature type="chain" id="PRO_1000077159" description="ATP-dependent Clp protease ATP-binding subunit ClpX">
    <location>
        <begin position="1"/>
        <end position="417"/>
    </location>
</feature>
<feature type="domain" description="ClpX-type ZB" evidence="2">
    <location>
        <begin position="1"/>
        <end position="54"/>
    </location>
</feature>
<feature type="binding site" evidence="2">
    <location>
        <position position="13"/>
    </location>
    <ligand>
        <name>Zn(2+)</name>
        <dbReference type="ChEBI" id="CHEBI:29105"/>
    </ligand>
</feature>
<feature type="binding site" evidence="2">
    <location>
        <position position="16"/>
    </location>
    <ligand>
        <name>Zn(2+)</name>
        <dbReference type="ChEBI" id="CHEBI:29105"/>
    </ligand>
</feature>
<feature type="binding site" evidence="2">
    <location>
        <position position="35"/>
    </location>
    <ligand>
        <name>Zn(2+)</name>
        <dbReference type="ChEBI" id="CHEBI:29105"/>
    </ligand>
</feature>
<feature type="binding site" evidence="2">
    <location>
        <position position="38"/>
    </location>
    <ligand>
        <name>Zn(2+)</name>
        <dbReference type="ChEBI" id="CHEBI:29105"/>
    </ligand>
</feature>
<feature type="binding site" evidence="1">
    <location>
        <begin position="119"/>
        <end position="126"/>
    </location>
    <ligand>
        <name>ATP</name>
        <dbReference type="ChEBI" id="CHEBI:30616"/>
    </ligand>
</feature>
<proteinExistence type="inferred from homology"/>
<sequence>MSRRDDRSDNLICSFCGKSQEEVKKLIAGPTVYICDECIELCNDIIAEESKLEEAMGPDVKKLPKPQEIKEVLDEYVIGQNQAKKVLAVAVYNHYKRIEAMAKPGEVEMQKSNILLLGPTGSGKTLLAQTLARILKVPFAMADATNLTEAGYVGEDVENIILNLLQAADYDVERAQKGIIYIDEIDKIARKSDSPSITRDVSGEGVQQALLKIIEGTVASVPPKGGRKHPQQEFLKVDTTNILFVCGGAFAGLENIIQQRIGVKTLGFGADVKKKIEKKAGELLIGVTPEDLLKFGFIPEFVGRLPVLASLTELDEEAMVQILKEPKNALVKQYQKLFEMEHVKLKFTDGSLVAIAKEALKRRTGARGLRSILENAMLDIMYEIPSQVMVKEVVISEDVIYNKEKPIIVYESVAESA</sequence>
<organism>
    <name type="scientific">Geotalea uraniireducens (strain Rf4)</name>
    <name type="common">Geobacter uraniireducens</name>
    <dbReference type="NCBI Taxonomy" id="351605"/>
    <lineage>
        <taxon>Bacteria</taxon>
        <taxon>Pseudomonadati</taxon>
        <taxon>Thermodesulfobacteriota</taxon>
        <taxon>Desulfuromonadia</taxon>
        <taxon>Geobacterales</taxon>
        <taxon>Geobacteraceae</taxon>
        <taxon>Geotalea</taxon>
    </lineage>
</organism>
<dbReference type="EMBL" id="CP000698">
    <property type="protein sequence ID" value="ABQ26106.1"/>
    <property type="molecule type" value="Genomic_DNA"/>
</dbReference>
<dbReference type="RefSeq" id="WP_011938809.1">
    <property type="nucleotide sequence ID" value="NC_009483.1"/>
</dbReference>
<dbReference type="SMR" id="A5GFA1"/>
<dbReference type="STRING" id="351605.Gura_1916"/>
<dbReference type="KEGG" id="gur:Gura_1916"/>
<dbReference type="HOGENOM" id="CLU_014218_8_2_7"/>
<dbReference type="OrthoDB" id="9804062at2"/>
<dbReference type="Proteomes" id="UP000006695">
    <property type="component" value="Chromosome"/>
</dbReference>
<dbReference type="GO" id="GO:0009376">
    <property type="term" value="C:HslUV protease complex"/>
    <property type="evidence" value="ECO:0007669"/>
    <property type="project" value="TreeGrafter"/>
</dbReference>
<dbReference type="GO" id="GO:0005524">
    <property type="term" value="F:ATP binding"/>
    <property type="evidence" value="ECO:0007669"/>
    <property type="project" value="UniProtKB-UniRule"/>
</dbReference>
<dbReference type="GO" id="GO:0016887">
    <property type="term" value="F:ATP hydrolysis activity"/>
    <property type="evidence" value="ECO:0007669"/>
    <property type="project" value="InterPro"/>
</dbReference>
<dbReference type="GO" id="GO:0140662">
    <property type="term" value="F:ATP-dependent protein folding chaperone"/>
    <property type="evidence" value="ECO:0007669"/>
    <property type="project" value="InterPro"/>
</dbReference>
<dbReference type="GO" id="GO:0046983">
    <property type="term" value="F:protein dimerization activity"/>
    <property type="evidence" value="ECO:0007669"/>
    <property type="project" value="InterPro"/>
</dbReference>
<dbReference type="GO" id="GO:0051082">
    <property type="term" value="F:unfolded protein binding"/>
    <property type="evidence" value="ECO:0007669"/>
    <property type="project" value="UniProtKB-UniRule"/>
</dbReference>
<dbReference type="GO" id="GO:0008270">
    <property type="term" value="F:zinc ion binding"/>
    <property type="evidence" value="ECO:0007669"/>
    <property type="project" value="InterPro"/>
</dbReference>
<dbReference type="GO" id="GO:0051301">
    <property type="term" value="P:cell division"/>
    <property type="evidence" value="ECO:0007669"/>
    <property type="project" value="TreeGrafter"/>
</dbReference>
<dbReference type="GO" id="GO:0051603">
    <property type="term" value="P:proteolysis involved in protein catabolic process"/>
    <property type="evidence" value="ECO:0007669"/>
    <property type="project" value="TreeGrafter"/>
</dbReference>
<dbReference type="CDD" id="cd19497">
    <property type="entry name" value="RecA-like_ClpX"/>
    <property type="match status" value="1"/>
</dbReference>
<dbReference type="FunFam" id="1.10.8.60:FF:000002">
    <property type="entry name" value="ATP-dependent Clp protease ATP-binding subunit ClpX"/>
    <property type="match status" value="1"/>
</dbReference>
<dbReference type="FunFam" id="3.40.50.300:FF:000005">
    <property type="entry name" value="ATP-dependent Clp protease ATP-binding subunit ClpX"/>
    <property type="match status" value="1"/>
</dbReference>
<dbReference type="Gene3D" id="1.10.8.60">
    <property type="match status" value="1"/>
</dbReference>
<dbReference type="Gene3D" id="6.20.220.10">
    <property type="entry name" value="ClpX chaperone, C4-type zinc finger domain"/>
    <property type="match status" value="1"/>
</dbReference>
<dbReference type="Gene3D" id="3.40.50.300">
    <property type="entry name" value="P-loop containing nucleotide triphosphate hydrolases"/>
    <property type="match status" value="1"/>
</dbReference>
<dbReference type="HAMAP" id="MF_00175">
    <property type="entry name" value="ClpX"/>
    <property type="match status" value="1"/>
</dbReference>
<dbReference type="InterPro" id="IPR003593">
    <property type="entry name" value="AAA+_ATPase"/>
</dbReference>
<dbReference type="InterPro" id="IPR050052">
    <property type="entry name" value="ATP-dep_Clp_protease_ClpX"/>
</dbReference>
<dbReference type="InterPro" id="IPR003959">
    <property type="entry name" value="ATPase_AAA_core"/>
</dbReference>
<dbReference type="InterPro" id="IPR019489">
    <property type="entry name" value="Clp_ATPase_C"/>
</dbReference>
<dbReference type="InterPro" id="IPR004487">
    <property type="entry name" value="Clp_protease_ATP-bd_su_ClpX"/>
</dbReference>
<dbReference type="InterPro" id="IPR046425">
    <property type="entry name" value="ClpX_bact"/>
</dbReference>
<dbReference type="InterPro" id="IPR027417">
    <property type="entry name" value="P-loop_NTPase"/>
</dbReference>
<dbReference type="InterPro" id="IPR010603">
    <property type="entry name" value="Znf_CppX_C4"/>
</dbReference>
<dbReference type="InterPro" id="IPR038366">
    <property type="entry name" value="Znf_CppX_C4_sf"/>
</dbReference>
<dbReference type="NCBIfam" id="TIGR00382">
    <property type="entry name" value="clpX"/>
    <property type="match status" value="1"/>
</dbReference>
<dbReference type="NCBIfam" id="NF003745">
    <property type="entry name" value="PRK05342.1"/>
    <property type="match status" value="1"/>
</dbReference>
<dbReference type="PANTHER" id="PTHR48102:SF7">
    <property type="entry name" value="ATP-DEPENDENT CLP PROTEASE ATP-BINDING SUBUNIT CLPX-LIKE, MITOCHONDRIAL"/>
    <property type="match status" value="1"/>
</dbReference>
<dbReference type="PANTHER" id="PTHR48102">
    <property type="entry name" value="ATP-DEPENDENT CLP PROTEASE ATP-BINDING SUBUNIT CLPX-LIKE, MITOCHONDRIAL-RELATED"/>
    <property type="match status" value="1"/>
</dbReference>
<dbReference type="Pfam" id="PF07724">
    <property type="entry name" value="AAA_2"/>
    <property type="match status" value="1"/>
</dbReference>
<dbReference type="Pfam" id="PF10431">
    <property type="entry name" value="ClpB_D2-small"/>
    <property type="match status" value="1"/>
</dbReference>
<dbReference type="Pfam" id="PF06689">
    <property type="entry name" value="zf-C4_ClpX"/>
    <property type="match status" value="1"/>
</dbReference>
<dbReference type="SMART" id="SM00382">
    <property type="entry name" value="AAA"/>
    <property type="match status" value="1"/>
</dbReference>
<dbReference type="SMART" id="SM01086">
    <property type="entry name" value="ClpB_D2-small"/>
    <property type="match status" value="1"/>
</dbReference>
<dbReference type="SMART" id="SM00994">
    <property type="entry name" value="zf-C4_ClpX"/>
    <property type="match status" value="1"/>
</dbReference>
<dbReference type="SUPFAM" id="SSF57716">
    <property type="entry name" value="Glucocorticoid receptor-like (DNA-binding domain)"/>
    <property type="match status" value="1"/>
</dbReference>
<dbReference type="SUPFAM" id="SSF52540">
    <property type="entry name" value="P-loop containing nucleoside triphosphate hydrolases"/>
    <property type="match status" value="1"/>
</dbReference>
<dbReference type="PROSITE" id="PS51902">
    <property type="entry name" value="CLPX_ZB"/>
    <property type="match status" value="1"/>
</dbReference>
<accession>A5GFA1</accession>
<name>CLPX_GEOUR</name>
<gene>
    <name evidence="1" type="primary">clpX</name>
    <name type="ordered locus">Gura_1916</name>
</gene>
<comment type="function">
    <text evidence="1">ATP-dependent specificity component of the Clp protease. It directs the protease to specific substrates. Can perform chaperone functions in the absence of ClpP.</text>
</comment>
<comment type="subunit">
    <text evidence="1">Component of the ClpX-ClpP complex. Forms a hexameric ring that, in the presence of ATP, binds to fourteen ClpP subunits assembled into a disk-like structure with a central cavity, resembling the structure of eukaryotic proteasomes.</text>
</comment>
<comment type="similarity">
    <text evidence="1">Belongs to the ClpX chaperone family.</text>
</comment>
<keyword id="KW-0067">ATP-binding</keyword>
<keyword id="KW-0143">Chaperone</keyword>
<keyword id="KW-0479">Metal-binding</keyword>
<keyword id="KW-0547">Nucleotide-binding</keyword>
<keyword id="KW-1185">Reference proteome</keyword>
<keyword id="KW-0862">Zinc</keyword>